<sequence>MSEGNQPKRVLGLPDVDPSQQDTFETPDPPESISNLADESSELVNESIDRSSLKPAKSHLKFANRKFNNDNEDFSDSIYKKSVPRTGGLLKNQTVFDILPSDESKVETPLQKFQRLQYEVMSFREEMQVIADNGGEVEKDIKGVDLTHQLADLQNQLSHLLENEKLQPILDENKQVIHYSQIQNNSSKKLISEIESFTQQSLSSSTTEQNTQQPSNNNTTTNITSSSSITPNHVTYELFYTGEQSKSQQLQRIQDLEKRLAKLETATGNKTTDSVPITQSILEIKEKLSLLDTTKIDVLQQKMKTVSKEMESLKIQDETSTKALTTNEKKINDIFETMNKWDIVGQQVPAIINRLYTLRSLHEEGISFSNHVSNLEKQQNDITSLLISNSSLMNKMDDSFKSNLLTIKSNIQQLESRIETLQNRQQQQQQ</sequence>
<gene>
    <name type="primary">dynB</name>
    <name type="synonym">dctn2</name>
    <name type="ORF">DDB_G0285503</name>
</gene>
<name>DCTN2_DICDI</name>
<protein>
    <recommendedName>
        <fullName>Dynactin subunit 2</fullName>
    </recommendedName>
</protein>
<evidence type="ECO:0000250" key="1"/>
<evidence type="ECO:0000255" key="2"/>
<evidence type="ECO:0000256" key="3">
    <source>
        <dbReference type="SAM" id="MobiDB-lite"/>
    </source>
</evidence>
<evidence type="ECO:0000305" key="4"/>
<dbReference type="EMBL" id="AAFI02000079">
    <property type="protein sequence ID" value="EAL64589.1"/>
    <property type="molecule type" value="Genomic_DNA"/>
</dbReference>
<dbReference type="RefSeq" id="XP_638093.1">
    <property type="nucleotide sequence ID" value="XM_633001.1"/>
</dbReference>
<dbReference type="SMR" id="Q54N50"/>
<dbReference type="FunCoup" id="Q54N50">
    <property type="interactions" value="371"/>
</dbReference>
<dbReference type="STRING" id="44689.Q54N50"/>
<dbReference type="PaxDb" id="44689-DDB0220488"/>
<dbReference type="EnsemblProtists" id="EAL64589">
    <property type="protein sequence ID" value="EAL64589"/>
    <property type="gene ID" value="DDB_G0285503"/>
</dbReference>
<dbReference type="GeneID" id="8625141"/>
<dbReference type="KEGG" id="ddi:DDB_G0285503"/>
<dbReference type="dictyBase" id="DDB_G0285503">
    <property type="gene designation" value="dynB"/>
</dbReference>
<dbReference type="VEuPathDB" id="AmoebaDB:DDB_G0285503"/>
<dbReference type="eggNOG" id="KOG3958">
    <property type="taxonomic scope" value="Eukaryota"/>
</dbReference>
<dbReference type="HOGENOM" id="CLU_638458_0_0_1"/>
<dbReference type="InParanoid" id="Q54N50"/>
<dbReference type="OMA" id="YKFGDWE"/>
<dbReference type="PhylomeDB" id="Q54N50"/>
<dbReference type="Reactome" id="R-DDI-6807878">
    <property type="pathway name" value="COPI-mediated anterograde transport"/>
</dbReference>
<dbReference type="PRO" id="PR:Q54N50"/>
<dbReference type="Proteomes" id="UP000002195">
    <property type="component" value="Chromosome 4"/>
</dbReference>
<dbReference type="GO" id="GO:0005813">
    <property type="term" value="C:centrosome"/>
    <property type="evidence" value="ECO:0000304"/>
    <property type="project" value="dictyBase"/>
</dbReference>
<dbReference type="GO" id="GO:0005737">
    <property type="term" value="C:cytoplasm"/>
    <property type="evidence" value="ECO:0000318"/>
    <property type="project" value="GO_Central"/>
</dbReference>
<dbReference type="GO" id="GO:0005869">
    <property type="term" value="C:dynactin complex"/>
    <property type="evidence" value="ECO:0000250"/>
    <property type="project" value="dictyBase"/>
</dbReference>
<dbReference type="GO" id="GO:0030286">
    <property type="term" value="C:dynein complex"/>
    <property type="evidence" value="ECO:0007669"/>
    <property type="project" value="UniProtKB-KW"/>
</dbReference>
<dbReference type="GO" id="GO:0016020">
    <property type="term" value="C:membrane"/>
    <property type="evidence" value="ECO:0007669"/>
    <property type="project" value="UniProtKB-SubCell"/>
</dbReference>
<dbReference type="GO" id="GO:0005874">
    <property type="term" value="C:microtubule"/>
    <property type="evidence" value="ECO:0007669"/>
    <property type="project" value="UniProtKB-KW"/>
</dbReference>
<dbReference type="GO" id="GO:0000278">
    <property type="term" value="P:mitotic cell cycle"/>
    <property type="evidence" value="ECO:0000250"/>
    <property type="project" value="dictyBase"/>
</dbReference>
<dbReference type="GO" id="GO:0007052">
    <property type="term" value="P:mitotic spindle organization"/>
    <property type="evidence" value="ECO:0000318"/>
    <property type="project" value="GO_Central"/>
</dbReference>
<dbReference type="InterPro" id="IPR028133">
    <property type="entry name" value="Dynamitin"/>
</dbReference>
<dbReference type="PANTHER" id="PTHR15346">
    <property type="entry name" value="DYNACTIN SUBUNIT"/>
    <property type="match status" value="1"/>
</dbReference>
<dbReference type="Pfam" id="PF04912">
    <property type="entry name" value="Dynamitin"/>
    <property type="match status" value="1"/>
</dbReference>
<organism>
    <name type="scientific">Dictyostelium discoideum</name>
    <name type="common">Social amoeba</name>
    <dbReference type="NCBI Taxonomy" id="44689"/>
    <lineage>
        <taxon>Eukaryota</taxon>
        <taxon>Amoebozoa</taxon>
        <taxon>Evosea</taxon>
        <taxon>Eumycetozoa</taxon>
        <taxon>Dictyostelia</taxon>
        <taxon>Dictyosteliales</taxon>
        <taxon>Dictyosteliaceae</taxon>
        <taxon>Dictyostelium</taxon>
    </lineage>
</organism>
<feature type="chain" id="PRO_0000328015" description="Dynactin subunit 2">
    <location>
        <begin position="1"/>
        <end position="430"/>
    </location>
</feature>
<feature type="region of interest" description="Disordered" evidence="3">
    <location>
        <begin position="1"/>
        <end position="51"/>
    </location>
</feature>
<feature type="region of interest" description="Disordered" evidence="3">
    <location>
        <begin position="201"/>
        <end position="228"/>
    </location>
</feature>
<feature type="coiled-coil region" evidence="2">
    <location>
        <begin position="241"/>
        <end position="319"/>
    </location>
</feature>
<feature type="coiled-coil region" evidence="2">
    <location>
        <begin position="397"/>
        <end position="430"/>
    </location>
</feature>
<feature type="compositionally biased region" description="Polar residues" evidence="3">
    <location>
        <begin position="32"/>
        <end position="44"/>
    </location>
</feature>
<comment type="function">
    <text evidence="1">Modulates cytoplasmic dynein binding to an organelle, and plays a role in prometaphase chromosome alignment and spindle organization during mitosis.</text>
</comment>
<comment type="subunit">
    <text evidence="1">Subunit of dynactin, a multiprotein complex associated with dynein.</text>
</comment>
<comment type="subcellular location">
    <subcellularLocation>
        <location evidence="1">Cytoplasm</location>
        <location evidence="1">Cytoskeleton</location>
    </subcellularLocation>
    <subcellularLocation>
        <location evidence="1">Membrane</location>
        <topology evidence="1">Peripheral membrane protein</topology>
    </subcellularLocation>
</comment>
<comment type="similarity">
    <text evidence="4">Belongs to the dynactin subunit 2 family.</text>
</comment>
<proteinExistence type="inferred from homology"/>
<keyword id="KW-0175">Coiled coil</keyword>
<keyword id="KW-0963">Cytoplasm</keyword>
<keyword id="KW-0206">Cytoskeleton</keyword>
<keyword id="KW-0243">Dynein</keyword>
<keyword id="KW-0472">Membrane</keyword>
<keyword id="KW-0493">Microtubule</keyword>
<keyword id="KW-1185">Reference proteome</keyword>
<accession>Q54N50</accession>
<reference key="1">
    <citation type="journal article" date="2005" name="Nature">
        <title>The genome of the social amoeba Dictyostelium discoideum.</title>
        <authorList>
            <person name="Eichinger L."/>
            <person name="Pachebat J.A."/>
            <person name="Gloeckner G."/>
            <person name="Rajandream M.A."/>
            <person name="Sucgang R."/>
            <person name="Berriman M."/>
            <person name="Song J."/>
            <person name="Olsen R."/>
            <person name="Szafranski K."/>
            <person name="Xu Q."/>
            <person name="Tunggal B."/>
            <person name="Kummerfeld S."/>
            <person name="Madera M."/>
            <person name="Konfortov B.A."/>
            <person name="Rivero F."/>
            <person name="Bankier A.T."/>
            <person name="Lehmann R."/>
            <person name="Hamlin N."/>
            <person name="Davies R."/>
            <person name="Gaudet P."/>
            <person name="Fey P."/>
            <person name="Pilcher K."/>
            <person name="Chen G."/>
            <person name="Saunders D."/>
            <person name="Sodergren E.J."/>
            <person name="Davis P."/>
            <person name="Kerhornou A."/>
            <person name="Nie X."/>
            <person name="Hall N."/>
            <person name="Anjard C."/>
            <person name="Hemphill L."/>
            <person name="Bason N."/>
            <person name="Farbrother P."/>
            <person name="Desany B."/>
            <person name="Just E."/>
            <person name="Morio T."/>
            <person name="Rost R."/>
            <person name="Churcher C.M."/>
            <person name="Cooper J."/>
            <person name="Haydock S."/>
            <person name="van Driessche N."/>
            <person name="Cronin A."/>
            <person name="Goodhead I."/>
            <person name="Muzny D.M."/>
            <person name="Mourier T."/>
            <person name="Pain A."/>
            <person name="Lu M."/>
            <person name="Harper D."/>
            <person name="Lindsay R."/>
            <person name="Hauser H."/>
            <person name="James K.D."/>
            <person name="Quiles M."/>
            <person name="Madan Babu M."/>
            <person name="Saito T."/>
            <person name="Buchrieser C."/>
            <person name="Wardroper A."/>
            <person name="Felder M."/>
            <person name="Thangavelu M."/>
            <person name="Johnson D."/>
            <person name="Knights A."/>
            <person name="Loulseged H."/>
            <person name="Mungall K.L."/>
            <person name="Oliver K."/>
            <person name="Price C."/>
            <person name="Quail M.A."/>
            <person name="Urushihara H."/>
            <person name="Hernandez J."/>
            <person name="Rabbinowitsch E."/>
            <person name="Steffen D."/>
            <person name="Sanders M."/>
            <person name="Ma J."/>
            <person name="Kohara Y."/>
            <person name="Sharp S."/>
            <person name="Simmonds M.N."/>
            <person name="Spiegler S."/>
            <person name="Tivey A."/>
            <person name="Sugano S."/>
            <person name="White B."/>
            <person name="Walker D."/>
            <person name="Woodward J.R."/>
            <person name="Winckler T."/>
            <person name="Tanaka Y."/>
            <person name="Shaulsky G."/>
            <person name="Schleicher M."/>
            <person name="Weinstock G.M."/>
            <person name="Rosenthal A."/>
            <person name="Cox E.C."/>
            <person name="Chisholm R.L."/>
            <person name="Gibbs R.A."/>
            <person name="Loomis W.F."/>
            <person name="Platzer M."/>
            <person name="Kay R.R."/>
            <person name="Williams J.G."/>
            <person name="Dear P.H."/>
            <person name="Noegel A.A."/>
            <person name="Barrell B.G."/>
            <person name="Kuspa A."/>
        </authorList>
    </citation>
    <scope>NUCLEOTIDE SEQUENCE [LARGE SCALE GENOMIC DNA]</scope>
    <source>
        <strain>AX4</strain>
    </source>
</reference>